<reference key="1">
    <citation type="journal article" date="2004" name="Nat. Biotechnol.">
        <title>Complete sequence and comparative genome analysis of the dairy bacterium Streptococcus thermophilus.</title>
        <authorList>
            <person name="Bolotin A."/>
            <person name="Quinquis B."/>
            <person name="Renault P."/>
            <person name="Sorokin A."/>
            <person name="Ehrlich S.D."/>
            <person name="Kulakauskas S."/>
            <person name="Lapidus A."/>
            <person name="Goltsman E."/>
            <person name="Mazur M."/>
            <person name="Pusch G.D."/>
            <person name="Fonstein M."/>
            <person name="Overbeek R."/>
            <person name="Kyprides N."/>
            <person name="Purnelle B."/>
            <person name="Prozzi D."/>
            <person name="Ngui K."/>
            <person name="Masuy D."/>
            <person name="Hancy F."/>
            <person name="Burteau S."/>
            <person name="Boutry M."/>
            <person name="Delcour J."/>
            <person name="Goffeau A."/>
            <person name="Hols P."/>
        </authorList>
    </citation>
    <scope>NUCLEOTIDE SEQUENCE [LARGE SCALE GENOMIC DNA]</scope>
    <source>
        <strain>CNRZ 1066</strain>
    </source>
</reference>
<protein>
    <recommendedName>
        <fullName evidence="1">Peptidyl-tRNA hydrolase</fullName>
        <shortName evidence="1">Pth</shortName>
        <ecNumber evidence="1">3.1.1.29</ecNumber>
    </recommendedName>
</protein>
<dbReference type="EC" id="3.1.1.29" evidence="1"/>
<dbReference type="EMBL" id="CP000024">
    <property type="protein sequence ID" value="AAV61624.1"/>
    <property type="molecule type" value="Genomic_DNA"/>
</dbReference>
<dbReference type="RefSeq" id="WP_002948591.1">
    <property type="nucleotide sequence ID" value="NC_006449.1"/>
</dbReference>
<dbReference type="SMR" id="Q5M222"/>
<dbReference type="GeneID" id="66897908"/>
<dbReference type="KEGG" id="stc:str0005"/>
<dbReference type="HOGENOM" id="CLU_062456_4_1_9"/>
<dbReference type="GO" id="GO:0005737">
    <property type="term" value="C:cytoplasm"/>
    <property type="evidence" value="ECO:0007669"/>
    <property type="project" value="UniProtKB-SubCell"/>
</dbReference>
<dbReference type="GO" id="GO:0004045">
    <property type="term" value="F:peptidyl-tRNA hydrolase activity"/>
    <property type="evidence" value="ECO:0007669"/>
    <property type="project" value="UniProtKB-UniRule"/>
</dbReference>
<dbReference type="GO" id="GO:0000049">
    <property type="term" value="F:tRNA binding"/>
    <property type="evidence" value="ECO:0007669"/>
    <property type="project" value="UniProtKB-UniRule"/>
</dbReference>
<dbReference type="GO" id="GO:0006515">
    <property type="term" value="P:protein quality control for misfolded or incompletely synthesized proteins"/>
    <property type="evidence" value="ECO:0007669"/>
    <property type="project" value="UniProtKB-UniRule"/>
</dbReference>
<dbReference type="GO" id="GO:0072344">
    <property type="term" value="P:rescue of stalled ribosome"/>
    <property type="evidence" value="ECO:0007669"/>
    <property type="project" value="UniProtKB-UniRule"/>
</dbReference>
<dbReference type="CDD" id="cd00462">
    <property type="entry name" value="PTH"/>
    <property type="match status" value="1"/>
</dbReference>
<dbReference type="FunFam" id="3.40.50.1470:FF:000001">
    <property type="entry name" value="Peptidyl-tRNA hydrolase"/>
    <property type="match status" value="1"/>
</dbReference>
<dbReference type="Gene3D" id="3.40.50.1470">
    <property type="entry name" value="Peptidyl-tRNA hydrolase"/>
    <property type="match status" value="1"/>
</dbReference>
<dbReference type="HAMAP" id="MF_00083">
    <property type="entry name" value="Pept_tRNA_hydro_bact"/>
    <property type="match status" value="1"/>
</dbReference>
<dbReference type="InterPro" id="IPR001328">
    <property type="entry name" value="Pept_tRNA_hydro"/>
</dbReference>
<dbReference type="InterPro" id="IPR018171">
    <property type="entry name" value="Pept_tRNA_hydro_CS"/>
</dbReference>
<dbReference type="InterPro" id="IPR036416">
    <property type="entry name" value="Pept_tRNA_hydro_sf"/>
</dbReference>
<dbReference type="NCBIfam" id="TIGR00447">
    <property type="entry name" value="pth"/>
    <property type="match status" value="1"/>
</dbReference>
<dbReference type="PANTHER" id="PTHR17224">
    <property type="entry name" value="PEPTIDYL-TRNA HYDROLASE"/>
    <property type="match status" value="1"/>
</dbReference>
<dbReference type="PANTHER" id="PTHR17224:SF1">
    <property type="entry name" value="PEPTIDYL-TRNA HYDROLASE"/>
    <property type="match status" value="1"/>
</dbReference>
<dbReference type="Pfam" id="PF01195">
    <property type="entry name" value="Pept_tRNA_hydro"/>
    <property type="match status" value="1"/>
</dbReference>
<dbReference type="SUPFAM" id="SSF53178">
    <property type="entry name" value="Peptidyl-tRNA hydrolase-like"/>
    <property type="match status" value="1"/>
</dbReference>
<dbReference type="PROSITE" id="PS01195">
    <property type="entry name" value="PEPT_TRNA_HYDROL_1"/>
    <property type="match status" value="1"/>
</dbReference>
<dbReference type="PROSITE" id="PS01196">
    <property type="entry name" value="PEPT_TRNA_HYDROL_2"/>
    <property type="match status" value="1"/>
</dbReference>
<comment type="function">
    <text evidence="1">Hydrolyzes ribosome-free peptidyl-tRNAs (with 1 or more amino acids incorporated), which drop off the ribosome during protein synthesis, or as a result of ribosome stalling.</text>
</comment>
<comment type="function">
    <text evidence="1">Catalyzes the release of premature peptidyl moieties from peptidyl-tRNA molecules trapped in stalled 50S ribosomal subunits, and thus maintains levels of free tRNAs and 50S ribosomes.</text>
</comment>
<comment type="catalytic activity">
    <reaction evidence="1">
        <text>an N-acyl-L-alpha-aminoacyl-tRNA + H2O = an N-acyl-L-amino acid + a tRNA + H(+)</text>
        <dbReference type="Rhea" id="RHEA:54448"/>
        <dbReference type="Rhea" id="RHEA-COMP:10123"/>
        <dbReference type="Rhea" id="RHEA-COMP:13883"/>
        <dbReference type="ChEBI" id="CHEBI:15377"/>
        <dbReference type="ChEBI" id="CHEBI:15378"/>
        <dbReference type="ChEBI" id="CHEBI:59874"/>
        <dbReference type="ChEBI" id="CHEBI:78442"/>
        <dbReference type="ChEBI" id="CHEBI:138191"/>
        <dbReference type="EC" id="3.1.1.29"/>
    </reaction>
</comment>
<comment type="subunit">
    <text evidence="1">Monomer.</text>
</comment>
<comment type="subcellular location">
    <subcellularLocation>
        <location evidence="1">Cytoplasm</location>
    </subcellularLocation>
</comment>
<comment type="similarity">
    <text evidence="1">Belongs to the PTH family.</text>
</comment>
<evidence type="ECO:0000255" key="1">
    <source>
        <dbReference type="HAMAP-Rule" id="MF_00083"/>
    </source>
</evidence>
<keyword id="KW-0963">Cytoplasm</keyword>
<keyword id="KW-0378">Hydrolase</keyword>
<keyword id="KW-0694">RNA-binding</keyword>
<keyword id="KW-0820">tRNA-binding</keyword>
<name>PTH_STRT1</name>
<sequence length="189" mass="21266">MTKLVVGLGNPGSKYHETRHNVGFMAIDLMAKELGLTFSEEKTFKAEVASTFLNGEKVYFVKPTTFMNLSGLAVRALLAYYNIPMEDFIVIYDDLDMEVGKLRFRQKGSAGGHNGIKSIIAETGTQEFDRIKIGIGRPQKGMTVVNHVLGKFSEDDYAMILLTLDKVETALHHYLKTNDFEDTMRRYNG</sequence>
<accession>Q5M222</accession>
<gene>
    <name evidence="1" type="primary">pth</name>
    <name type="ordered locus">str0005</name>
</gene>
<organism>
    <name type="scientific">Streptococcus thermophilus (strain CNRZ 1066)</name>
    <dbReference type="NCBI Taxonomy" id="299768"/>
    <lineage>
        <taxon>Bacteria</taxon>
        <taxon>Bacillati</taxon>
        <taxon>Bacillota</taxon>
        <taxon>Bacilli</taxon>
        <taxon>Lactobacillales</taxon>
        <taxon>Streptococcaceae</taxon>
        <taxon>Streptococcus</taxon>
    </lineage>
</organism>
<proteinExistence type="inferred from homology"/>
<feature type="chain" id="PRO_0000187834" description="Peptidyl-tRNA hydrolase">
    <location>
        <begin position="1"/>
        <end position="189"/>
    </location>
</feature>
<feature type="active site" description="Proton acceptor" evidence="1">
    <location>
        <position position="20"/>
    </location>
</feature>
<feature type="binding site" evidence="1">
    <location>
        <position position="15"/>
    </location>
    <ligand>
        <name>tRNA</name>
        <dbReference type="ChEBI" id="CHEBI:17843"/>
    </ligand>
</feature>
<feature type="binding site" evidence="1">
    <location>
        <position position="66"/>
    </location>
    <ligand>
        <name>tRNA</name>
        <dbReference type="ChEBI" id="CHEBI:17843"/>
    </ligand>
</feature>
<feature type="binding site" evidence="1">
    <location>
        <position position="68"/>
    </location>
    <ligand>
        <name>tRNA</name>
        <dbReference type="ChEBI" id="CHEBI:17843"/>
    </ligand>
</feature>
<feature type="binding site" evidence="1">
    <location>
        <position position="114"/>
    </location>
    <ligand>
        <name>tRNA</name>
        <dbReference type="ChEBI" id="CHEBI:17843"/>
    </ligand>
</feature>
<feature type="site" description="Discriminates between blocked and unblocked aminoacyl-tRNA" evidence="1">
    <location>
        <position position="10"/>
    </location>
</feature>
<feature type="site" description="Stabilizes the basic form of H active site to accept a proton" evidence="1">
    <location>
        <position position="93"/>
    </location>
</feature>